<organism>
    <name type="scientific">Pelagibacter ubique (strain HTCC1062)</name>
    <dbReference type="NCBI Taxonomy" id="335992"/>
    <lineage>
        <taxon>Bacteria</taxon>
        <taxon>Pseudomonadati</taxon>
        <taxon>Pseudomonadota</taxon>
        <taxon>Alphaproteobacteria</taxon>
        <taxon>Candidatus Pelagibacterales</taxon>
        <taxon>Candidatus Pelagibacteraceae</taxon>
        <taxon>Candidatus Pelagibacter</taxon>
    </lineage>
</organism>
<name>PURL_PELUB</name>
<comment type="function">
    <text evidence="1">Part of the phosphoribosylformylglycinamidine synthase complex involved in the purines biosynthetic pathway. Catalyzes the ATP-dependent conversion of formylglycinamide ribonucleotide (FGAR) and glutamine to yield formylglycinamidine ribonucleotide (FGAM) and glutamate. The FGAM synthase complex is composed of three subunits. PurQ produces an ammonia molecule by converting glutamine to glutamate. PurL transfers the ammonia molecule to FGAR to form FGAM in an ATP-dependent manner. PurS interacts with PurQ and PurL and is thought to assist in the transfer of the ammonia molecule from PurQ to PurL.</text>
</comment>
<comment type="catalytic activity">
    <reaction evidence="1">
        <text>N(2)-formyl-N(1)-(5-phospho-beta-D-ribosyl)glycinamide + L-glutamine + ATP + H2O = 2-formamido-N(1)-(5-O-phospho-beta-D-ribosyl)acetamidine + L-glutamate + ADP + phosphate + H(+)</text>
        <dbReference type="Rhea" id="RHEA:17129"/>
        <dbReference type="ChEBI" id="CHEBI:15377"/>
        <dbReference type="ChEBI" id="CHEBI:15378"/>
        <dbReference type="ChEBI" id="CHEBI:29985"/>
        <dbReference type="ChEBI" id="CHEBI:30616"/>
        <dbReference type="ChEBI" id="CHEBI:43474"/>
        <dbReference type="ChEBI" id="CHEBI:58359"/>
        <dbReference type="ChEBI" id="CHEBI:147286"/>
        <dbReference type="ChEBI" id="CHEBI:147287"/>
        <dbReference type="ChEBI" id="CHEBI:456216"/>
        <dbReference type="EC" id="6.3.5.3"/>
    </reaction>
</comment>
<comment type="pathway">
    <text evidence="1">Purine metabolism; IMP biosynthesis via de novo pathway; 5-amino-1-(5-phospho-D-ribosyl)imidazole from N(2)-formyl-N(1)-(5-phospho-D-ribosyl)glycinamide: step 1/2.</text>
</comment>
<comment type="subunit">
    <text evidence="1">Monomer. Part of the FGAM synthase complex composed of 1 PurL, 1 PurQ and 2 PurS subunits.</text>
</comment>
<comment type="subcellular location">
    <subcellularLocation>
        <location evidence="1">Cytoplasm</location>
    </subcellularLocation>
</comment>
<comment type="similarity">
    <text evidence="1">Belongs to the FGAMS family.</text>
</comment>
<reference key="1">
    <citation type="journal article" date="2005" name="Science">
        <title>Genome streamlining in a cosmopolitan oceanic bacterium.</title>
        <authorList>
            <person name="Giovannoni S.J."/>
            <person name="Tripp H.J."/>
            <person name="Givan S."/>
            <person name="Podar M."/>
            <person name="Vergin K.L."/>
            <person name="Baptista D."/>
            <person name="Bibbs L."/>
            <person name="Eads J."/>
            <person name="Richardson T.H."/>
            <person name="Noordewier M."/>
            <person name="Rappe M.S."/>
            <person name="Short J.M."/>
            <person name="Carrington J.C."/>
            <person name="Mathur E.J."/>
        </authorList>
    </citation>
    <scope>NUCLEOTIDE SEQUENCE [LARGE SCALE GENOMIC DNA]</scope>
    <source>
        <strain>HTCC1062</strain>
    </source>
</reference>
<keyword id="KW-0067">ATP-binding</keyword>
<keyword id="KW-0963">Cytoplasm</keyword>
<keyword id="KW-0436">Ligase</keyword>
<keyword id="KW-0460">Magnesium</keyword>
<keyword id="KW-0479">Metal-binding</keyword>
<keyword id="KW-0547">Nucleotide-binding</keyword>
<keyword id="KW-0658">Purine biosynthesis</keyword>
<keyword id="KW-1185">Reference proteome</keyword>
<sequence length="730" mass="80411">MIVNEQLAIDHGLKKDEYKKICDLLKRVPNITELGIFSAMWNEHCSYKSSRFHLKNLPTKGKNVIQGPGENAGVIDIGDDDAIVFKIESHNHPSFIEPYQGAATGVGGIMRDVFTMGARPIANLNSIHFGSPQHKKTKNLLRGVVHGIGGYGNCMGVPTIAGQTSFDESYNGNILVNAMTLGHVKKDKIFYSKAAGLGKPVIYVGSKTGRDGIHGASMASASFDDKIEEKKPTVQVGDPFTEKLLLEACLELMAGDSIIAIQDMGAAGLTSSSIEMASKGNLGIEINLSKVPCREANMSPYEIMLSESQERMLIVLENGKEEMAKKIFDKWNLDFAVIGQTTKSKKIELYFNEEKVADIPVNTLVENSPMYDRKWKKAKLPKRIKVDKEQFKTLKVKNVLNKILSNPNVCSKEWIWQQYDHTVMGDTIQKPGGDAGVVRVHGTNKAVAASVDSSAVYCWAHPLSGGKQIVCESWRNLISVGAKPIAITNCLNFGSPENEENMGEFVECVQGLGEASAYLEFPVVSGNVSFYNQTKDIGIKPTPAIGGVGLIKDYQNMVTMDLKEADNILLVIGKTEGHLDQSLFARDILNEKNGPPPEINLFNEKNNGETILKLINKKFIKSAHDVSLGGIITALSKMCIKGKKGATLKKSNYLINQFEYLFGEDQGRYIIEISKDDLENATKILQENSVHFDELGLVNEDGLIIDDKTKVSIDDLIKSHTNWLTNYMEN</sequence>
<proteinExistence type="inferred from homology"/>
<gene>
    <name evidence="1" type="primary">purL</name>
    <name type="ordered locus">SAR11_1141</name>
</gene>
<dbReference type="EC" id="6.3.5.3" evidence="1"/>
<dbReference type="EMBL" id="CP000084">
    <property type="protein sequence ID" value="AAZ21944.1"/>
    <property type="molecule type" value="Genomic_DNA"/>
</dbReference>
<dbReference type="RefSeq" id="WP_006996787.1">
    <property type="nucleotide sequence ID" value="NC_007205.1"/>
</dbReference>
<dbReference type="SMR" id="Q4FLJ4"/>
<dbReference type="STRING" id="335992.SAR11_1141"/>
<dbReference type="GeneID" id="66295635"/>
<dbReference type="KEGG" id="pub:SAR11_1141"/>
<dbReference type="eggNOG" id="COG0046">
    <property type="taxonomic scope" value="Bacteria"/>
</dbReference>
<dbReference type="HOGENOM" id="CLU_003100_0_1_5"/>
<dbReference type="OrthoDB" id="9804441at2"/>
<dbReference type="UniPathway" id="UPA00074">
    <property type="reaction ID" value="UER00128"/>
</dbReference>
<dbReference type="Proteomes" id="UP000002528">
    <property type="component" value="Chromosome"/>
</dbReference>
<dbReference type="GO" id="GO:0005737">
    <property type="term" value="C:cytoplasm"/>
    <property type="evidence" value="ECO:0007669"/>
    <property type="project" value="UniProtKB-SubCell"/>
</dbReference>
<dbReference type="GO" id="GO:0005524">
    <property type="term" value="F:ATP binding"/>
    <property type="evidence" value="ECO:0007669"/>
    <property type="project" value="UniProtKB-UniRule"/>
</dbReference>
<dbReference type="GO" id="GO:0000287">
    <property type="term" value="F:magnesium ion binding"/>
    <property type="evidence" value="ECO:0007669"/>
    <property type="project" value="UniProtKB-UniRule"/>
</dbReference>
<dbReference type="GO" id="GO:0004642">
    <property type="term" value="F:phosphoribosylformylglycinamidine synthase activity"/>
    <property type="evidence" value="ECO:0007669"/>
    <property type="project" value="UniProtKB-UniRule"/>
</dbReference>
<dbReference type="GO" id="GO:0006189">
    <property type="term" value="P:'de novo' IMP biosynthetic process"/>
    <property type="evidence" value="ECO:0007669"/>
    <property type="project" value="UniProtKB-UniRule"/>
</dbReference>
<dbReference type="CDD" id="cd02203">
    <property type="entry name" value="PurL_repeat1"/>
    <property type="match status" value="1"/>
</dbReference>
<dbReference type="CDD" id="cd02204">
    <property type="entry name" value="PurL_repeat2"/>
    <property type="match status" value="1"/>
</dbReference>
<dbReference type="FunFam" id="3.30.1330.10:FF:000004">
    <property type="entry name" value="Phosphoribosylformylglycinamidine synthase subunit PurL"/>
    <property type="match status" value="1"/>
</dbReference>
<dbReference type="Gene3D" id="3.90.650.10">
    <property type="entry name" value="PurM-like C-terminal domain"/>
    <property type="match status" value="2"/>
</dbReference>
<dbReference type="Gene3D" id="3.30.1330.10">
    <property type="entry name" value="PurM-like, N-terminal domain"/>
    <property type="match status" value="2"/>
</dbReference>
<dbReference type="HAMAP" id="MF_00420">
    <property type="entry name" value="PurL_2"/>
    <property type="match status" value="1"/>
</dbReference>
<dbReference type="InterPro" id="IPR010074">
    <property type="entry name" value="PRibForGlyAmidine_synth_PurL"/>
</dbReference>
<dbReference type="InterPro" id="IPR041609">
    <property type="entry name" value="PurL_linker"/>
</dbReference>
<dbReference type="InterPro" id="IPR010918">
    <property type="entry name" value="PurM-like_C_dom"/>
</dbReference>
<dbReference type="InterPro" id="IPR036676">
    <property type="entry name" value="PurM-like_C_sf"/>
</dbReference>
<dbReference type="InterPro" id="IPR016188">
    <property type="entry name" value="PurM-like_N"/>
</dbReference>
<dbReference type="InterPro" id="IPR036921">
    <property type="entry name" value="PurM-like_N_sf"/>
</dbReference>
<dbReference type="NCBIfam" id="TIGR01736">
    <property type="entry name" value="FGAM_synth_II"/>
    <property type="match status" value="1"/>
</dbReference>
<dbReference type="NCBIfam" id="NF002290">
    <property type="entry name" value="PRK01213.1"/>
    <property type="match status" value="1"/>
</dbReference>
<dbReference type="PANTHER" id="PTHR43555">
    <property type="entry name" value="PHOSPHORIBOSYLFORMYLGLYCINAMIDINE SYNTHASE SUBUNIT PURL"/>
    <property type="match status" value="1"/>
</dbReference>
<dbReference type="PANTHER" id="PTHR43555:SF1">
    <property type="entry name" value="PHOSPHORIBOSYLFORMYLGLYCINAMIDINE SYNTHASE SUBUNIT PURL"/>
    <property type="match status" value="1"/>
</dbReference>
<dbReference type="Pfam" id="PF00586">
    <property type="entry name" value="AIRS"/>
    <property type="match status" value="2"/>
</dbReference>
<dbReference type="Pfam" id="PF02769">
    <property type="entry name" value="AIRS_C"/>
    <property type="match status" value="2"/>
</dbReference>
<dbReference type="Pfam" id="PF18072">
    <property type="entry name" value="FGAR-AT_linker"/>
    <property type="match status" value="1"/>
</dbReference>
<dbReference type="PIRSF" id="PIRSF001587">
    <property type="entry name" value="FGAM_synthase_II"/>
    <property type="match status" value="1"/>
</dbReference>
<dbReference type="SUPFAM" id="SSF56042">
    <property type="entry name" value="PurM C-terminal domain-like"/>
    <property type="match status" value="2"/>
</dbReference>
<dbReference type="SUPFAM" id="SSF55326">
    <property type="entry name" value="PurM N-terminal domain-like"/>
    <property type="match status" value="2"/>
</dbReference>
<protein>
    <recommendedName>
        <fullName evidence="1">Phosphoribosylformylglycinamidine synthase subunit PurL</fullName>
        <shortName evidence="1">FGAM synthase</shortName>
        <ecNumber evidence="1">6.3.5.3</ecNumber>
    </recommendedName>
    <alternativeName>
        <fullName evidence="1">Formylglycinamide ribonucleotide amidotransferase subunit II</fullName>
        <shortName evidence="1">FGAR amidotransferase II</shortName>
        <shortName evidence="1">FGAR-AT II</shortName>
    </alternativeName>
    <alternativeName>
        <fullName evidence="1">Glutamine amidotransferase PurL</fullName>
    </alternativeName>
    <alternativeName>
        <fullName evidence="1">Phosphoribosylformylglycinamidine synthase subunit II</fullName>
    </alternativeName>
</protein>
<accession>Q4FLJ4</accession>
<evidence type="ECO:0000255" key="1">
    <source>
        <dbReference type="HAMAP-Rule" id="MF_00420"/>
    </source>
</evidence>
<feature type="chain" id="PRO_0000236658" description="Phosphoribosylformylglycinamidine synthase subunit PurL">
    <location>
        <begin position="1"/>
        <end position="730"/>
    </location>
</feature>
<feature type="active site" evidence="1">
    <location>
        <position position="44"/>
    </location>
</feature>
<feature type="active site" description="Proton acceptor" evidence="1">
    <location>
        <position position="90"/>
    </location>
</feature>
<feature type="binding site" evidence="1">
    <location>
        <position position="47"/>
    </location>
    <ligand>
        <name>ATP</name>
        <dbReference type="ChEBI" id="CHEBI:30616"/>
    </ligand>
</feature>
<feature type="binding site" evidence="1">
    <location>
        <position position="86"/>
    </location>
    <ligand>
        <name>ATP</name>
        <dbReference type="ChEBI" id="CHEBI:30616"/>
    </ligand>
</feature>
<feature type="binding site" evidence="1">
    <location>
        <position position="88"/>
    </location>
    <ligand>
        <name>Mg(2+)</name>
        <dbReference type="ChEBI" id="CHEBI:18420"/>
        <label>1</label>
    </ligand>
</feature>
<feature type="binding site" evidence="1">
    <location>
        <begin position="89"/>
        <end position="92"/>
    </location>
    <ligand>
        <name>substrate</name>
    </ligand>
</feature>
<feature type="binding site" evidence="1">
    <location>
        <position position="111"/>
    </location>
    <ligand>
        <name>substrate</name>
    </ligand>
</feature>
<feature type="binding site" evidence="1">
    <location>
        <position position="112"/>
    </location>
    <ligand>
        <name>Mg(2+)</name>
        <dbReference type="ChEBI" id="CHEBI:18420"/>
        <label>2</label>
    </ligand>
</feature>
<feature type="binding site" evidence="1">
    <location>
        <position position="235"/>
    </location>
    <ligand>
        <name>substrate</name>
    </ligand>
</feature>
<feature type="binding site" evidence="1">
    <location>
        <position position="263"/>
    </location>
    <ligand>
        <name>Mg(2+)</name>
        <dbReference type="ChEBI" id="CHEBI:18420"/>
        <label>2</label>
    </ligand>
</feature>
<feature type="binding site" evidence="1">
    <location>
        <begin position="307"/>
        <end position="309"/>
    </location>
    <ligand>
        <name>substrate</name>
    </ligand>
</feature>
<feature type="binding site" evidence="1">
    <location>
        <position position="489"/>
    </location>
    <ligand>
        <name>ATP</name>
        <dbReference type="ChEBI" id="CHEBI:30616"/>
    </ligand>
</feature>
<feature type="binding site" evidence="1">
    <location>
        <position position="526"/>
    </location>
    <ligand>
        <name>ATP</name>
        <dbReference type="ChEBI" id="CHEBI:30616"/>
    </ligand>
</feature>
<feature type="binding site" evidence="1">
    <location>
        <position position="527"/>
    </location>
    <ligand>
        <name>Mg(2+)</name>
        <dbReference type="ChEBI" id="CHEBI:18420"/>
        <label>1</label>
    </ligand>
</feature>
<feature type="binding site" evidence="1">
    <location>
        <position position="529"/>
    </location>
    <ligand>
        <name>substrate</name>
    </ligand>
</feature>